<name>DAPE_PSEAE</name>
<organism>
    <name type="scientific">Pseudomonas aeruginosa (strain ATCC 15692 / DSM 22644 / CIP 104116 / JCM 14847 / LMG 12228 / 1C / PRS 101 / PAO1)</name>
    <dbReference type="NCBI Taxonomy" id="208964"/>
    <lineage>
        <taxon>Bacteria</taxon>
        <taxon>Pseudomonadati</taxon>
        <taxon>Pseudomonadota</taxon>
        <taxon>Gammaproteobacteria</taxon>
        <taxon>Pseudomonadales</taxon>
        <taxon>Pseudomonadaceae</taxon>
        <taxon>Pseudomonas</taxon>
    </lineage>
</organism>
<gene>
    <name evidence="1" type="primary">dapE</name>
    <name type="ordered locus">PA1162</name>
</gene>
<evidence type="ECO:0000255" key="1">
    <source>
        <dbReference type="HAMAP-Rule" id="MF_01690"/>
    </source>
</evidence>
<feature type="chain" id="PRO_0000375653" description="Succinyl-diaminopimelate desuccinylase">
    <location>
        <begin position="1"/>
        <end position="383"/>
    </location>
</feature>
<feature type="active site" evidence="1">
    <location>
        <position position="75"/>
    </location>
</feature>
<feature type="active site" description="Proton acceptor" evidence="1">
    <location>
        <position position="141"/>
    </location>
</feature>
<feature type="binding site" evidence="1">
    <location>
        <position position="73"/>
    </location>
    <ligand>
        <name>Zn(2+)</name>
        <dbReference type="ChEBI" id="CHEBI:29105"/>
        <label>1</label>
    </ligand>
</feature>
<feature type="binding site" evidence="1">
    <location>
        <position position="107"/>
    </location>
    <ligand>
        <name>Zn(2+)</name>
        <dbReference type="ChEBI" id="CHEBI:29105"/>
        <label>1</label>
    </ligand>
</feature>
<feature type="binding site" evidence="1">
    <location>
        <position position="107"/>
    </location>
    <ligand>
        <name>Zn(2+)</name>
        <dbReference type="ChEBI" id="CHEBI:29105"/>
        <label>2</label>
    </ligand>
</feature>
<feature type="binding site" evidence="1">
    <location>
        <position position="142"/>
    </location>
    <ligand>
        <name>Zn(2+)</name>
        <dbReference type="ChEBI" id="CHEBI:29105"/>
        <label>2</label>
    </ligand>
</feature>
<feature type="binding site" evidence="1">
    <location>
        <position position="170"/>
    </location>
    <ligand>
        <name>Zn(2+)</name>
        <dbReference type="ChEBI" id="CHEBI:29105"/>
        <label>1</label>
    </ligand>
</feature>
<feature type="binding site" evidence="1">
    <location>
        <position position="356"/>
    </location>
    <ligand>
        <name>Zn(2+)</name>
        <dbReference type="ChEBI" id="CHEBI:29105"/>
        <label>2</label>
    </ligand>
</feature>
<reference key="1">
    <citation type="journal article" date="2000" name="Nature">
        <title>Complete genome sequence of Pseudomonas aeruginosa PAO1, an opportunistic pathogen.</title>
        <authorList>
            <person name="Stover C.K."/>
            <person name="Pham X.-Q.T."/>
            <person name="Erwin A.L."/>
            <person name="Mizoguchi S.D."/>
            <person name="Warrener P."/>
            <person name="Hickey M.J."/>
            <person name="Brinkman F.S.L."/>
            <person name="Hufnagle W.O."/>
            <person name="Kowalik D.J."/>
            <person name="Lagrou M."/>
            <person name="Garber R.L."/>
            <person name="Goltry L."/>
            <person name="Tolentino E."/>
            <person name="Westbrock-Wadman S."/>
            <person name="Yuan Y."/>
            <person name="Brody L.L."/>
            <person name="Coulter S.N."/>
            <person name="Folger K.R."/>
            <person name="Kas A."/>
            <person name="Larbig K."/>
            <person name="Lim R.M."/>
            <person name="Smith K.A."/>
            <person name="Spencer D.H."/>
            <person name="Wong G.K.-S."/>
            <person name="Wu Z."/>
            <person name="Paulsen I.T."/>
            <person name="Reizer J."/>
            <person name="Saier M.H. Jr."/>
            <person name="Hancock R.E.W."/>
            <person name="Lory S."/>
            <person name="Olson M.V."/>
        </authorList>
    </citation>
    <scope>NUCLEOTIDE SEQUENCE [LARGE SCALE GENOMIC DNA]</scope>
    <source>
        <strain>ATCC 15692 / DSM 22644 / CIP 104116 / JCM 14847 / LMG 12228 / 1C / PRS 101 / PAO1</strain>
    </source>
</reference>
<dbReference type="EC" id="3.5.1.18" evidence="1"/>
<dbReference type="EMBL" id="AE004091">
    <property type="protein sequence ID" value="AAG04551.1"/>
    <property type="molecule type" value="Genomic_DNA"/>
</dbReference>
<dbReference type="PIR" id="G83500">
    <property type="entry name" value="G83500"/>
</dbReference>
<dbReference type="RefSeq" id="NP_249853.1">
    <property type="nucleotide sequence ID" value="NC_002516.2"/>
</dbReference>
<dbReference type="RefSeq" id="WP_003082377.1">
    <property type="nucleotide sequence ID" value="NZ_QZGE01000006.1"/>
</dbReference>
<dbReference type="SMR" id="Q9I4H5"/>
<dbReference type="FunCoup" id="Q9I4H5">
    <property type="interactions" value="511"/>
</dbReference>
<dbReference type="STRING" id="208964.PA1162"/>
<dbReference type="PaxDb" id="208964-PA1162"/>
<dbReference type="DNASU" id="877783"/>
<dbReference type="GeneID" id="877783"/>
<dbReference type="KEGG" id="pae:PA1162"/>
<dbReference type="PATRIC" id="fig|208964.12.peg.1207"/>
<dbReference type="PseudoCAP" id="PA1162"/>
<dbReference type="HOGENOM" id="CLU_021802_4_0_6"/>
<dbReference type="InParanoid" id="Q9I4H5"/>
<dbReference type="OrthoDB" id="9809784at2"/>
<dbReference type="PhylomeDB" id="Q9I4H5"/>
<dbReference type="BioCyc" id="PAER208964:G1FZ6-1187-MONOMER"/>
<dbReference type="UniPathway" id="UPA00034">
    <property type="reaction ID" value="UER00021"/>
</dbReference>
<dbReference type="Proteomes" id="UP000002438">
    <property type="component" value="Chromosome"/>
</dbReference>
<dbReference type="GO" id="GO:0005829">
    <property type="term" value="C:cytosol"/>
    <property type="evidence" value="ECO:0000318"/>
    <property type="project" value="GO_Central"/>
</dbReference>
<dbReference type="GO" id="GO:0050897">
    <property type="term" value="F:cobalt ion binding"/>
    <property type="evidence" value="ECO:0007669"/>
    <property type="project" value="UniProtKB-UniRule"/>
</dbReference>
<dbReference type="GO" id="GO:0009014">
    <property type="term" value="F:succinyl-diaminopimelate desuccinylase activity"/>
    <property type="evidence" value="ECO:0000318"/>
    <property type="project" value="GO_Central"/>
</dbReference>
<dbReference type="GO" id="GO:0008270">
    <property type="term" value="F:zinc ion binding"/>
    <property type="evidence" value="ECO:0007669"/>
    <property type="project" value="UniProtKB-UniRule"/>
</dbReference>
<dbReference type="GO" id="GO:0019877">
    <property type="term" value="P:diaminopimelate biosynthetic process"/>
    <property type="evidence" value="ECO:0007669"/>
    <property type="project" value="UniProtKB-UniRule"/>
</dbReference>
<dbReference type="GO" id="GO:0009089">
    <property type="term" value="P:lysine biosynthetic process via diaminopimelate"/>
    <property type="evidence" value="ECO:0000318"/>
    <property type="project" value="GO_Central"/>
</dbReference>
<dbReference type="CDD" id="cd03891">
    <property type="entry name" value="M20_DapE_proteobac"/>
    <property type="match status" value="1"/>
</dbReference>
<dbReference type="FunFam" id="3.30.70.360:FF:000011">
    <property type="entry name" value="Succinyl-diaminopimelate desuccinylase"/>
    <property type="match status" value="1"/>
</dbReference>
<dbReference type="FunFam" id="3.40.630.10:FF:000005">
    <property type="entry name" value="Succinyl-diaminopimelate desuccinylase"/>
    <property type="match status" value="1"/>
</dbReference>
<dbReference type="FunFam" id="3.40.630.10:FF:000010">
    <property type="entry name" value="Succinyl-diaminopimelate desuccinylase"/>
    <property type="match status" value="1"/>
</dbReference>
<dbReference type="Gene3D" id="3.40.630.10">
    <property type="entry name" value="Zn peptidases"/>
    <property type="match status" value="2"/>
</dbReference>
<dbReference type="HAMAP" id="MF_01690">
    <property type="entry name" value="DapE"/>
    <property type="match status" value="1"/>
</dbReference>
<dbReference type="InterPro" id="IPR001261">
    <property type="entry name" value="ArgE/DapE_CS"/>
</dbReference>
<dbReference type="InterPro" id="IPR036264">
    <property type="entry name" value="Bact_exopeptidase_dim_dom"/>
</dbReference>
<dbReference type="InterPro" id="IPR005941">
    <property type="entry name" value="DapE_proteobac"/>
</dbReference>
<dbReference type="InterPro" id="IPR002933">
    <property type="entry name" value="Peptidase_M20"/>
</dbReference>
<dbReference type="InterPro" id="IPR011650">
    <property type="entry name" value="Peptidase_M20_dimer"/>
</dbReference>
<dbReference type="InterPro" id="IPR050072">
    <property type="entry name" value="Peptidase_M20A"/>
</dbReference>
<dbReference type="NCBIfam" id="TIGR01246">
    <property type="entry name" value="dapE_proteo"/>
    <property type="match status" value="1"/>
</dbReference>
<dbReference type="NCBIfam" id="NF009557">
    <property type="entry name" value="PRK13009.1"/>
    <property type="match status" value="1"/>
</dbReference>
<dbReference type="PANTHER" id="PTHR43808">
    <property type="entry name" value="ACETYLORNITHINE DEACETYLASE"/>
    <property type="match status" value="1"/>
</dbReference>
<dbReference type="PANTHER" id="PTHR43808:SF31">
    <property type="entry name" value="N-ACETYL-L-CITRULLINE DEACETYLASE"/>
    <property type="match status" value="1"/>
</dbReference>
<dbReference type="Pfam" id="PF07687">
    <property type="entry name" value="M20_dimer"/>
    <property type="match status" value="1"/>
</dbReference>
<dbReference type="Pfam" id="PF01546">
    <property type="entry name" value="Peptidase_M20"/>
    <property type="match status" value="1"/>
</dbReference>
<dbReference type="SUPFAM" id="SSF55031">
    <property type="entry name" value="Bacterial exopeptidase dimerisation domain"/>
    <property type="match status" value="1"/>
</dbReference>
<dbReference type="SUPFAM" id="SSF53187">
    <property type="entry name" value="Zn-dependent exopeptidases"/>
    <property type="match status" value="1"/>
</dbReference>
<dbReference type="PROSITE" id="PS00759">
    <property type="entry name" value="ARGE_DAPE_CPG2_2"/>
    <property type="match status" value="1"/>
</dbReference>
<accession>Q9I4H5</accession>
<proteinExistence type="inferred from homology"/>
<comment type="function">
    <text evidence="1">Catalyzes the hydrolysis of N-succinyl-L,L-diaminopimelic acid (SDAP), forming succinate and LL-2,6-diaminopimelate (DAP), an intermediate involved in the bacterial biosynthesis of lysine and meso-diaminopimelic acid, an essential component of bacterial cell walls.</text>
</comment>
<comment type="catalytic activity">
    <reaction evidence="1">
        <text>N-succinyl-(2S,6S)-2,6-diaminopimelate + H2O = (2S,6S)-2,6-diaminopimelate + succinate</text>
        <dbReference type="Rhea" id="RHEA:22608"/>
        <dbReference type="ChEBI" id="CHEBI:15377"/>
        <dbReference type="ChEBI" id="CHEBI:30031"/>
        <dbReference type="ChEBI" id="CHEBI:57609"/>
        <dbReference type="ChEBI" id="CHEBI:58087"/>
        <dbReference type="EC" id="3.5.1.18"/>
    </reaction>
</comment>
<comment type="cofactor">
    <cofactor evidence="1">
        <name>Zn(2+)</name>
        <dbReference type="ChEBI" id="CHEBI:29105"/>
    </cofactor>
    <cofactor evidence="1">
        <name>Co(2+)</name>
        <dbReference type="ChEBI" id="CHEBI:48828"/>
    </cofactor>
    <text evidence="1">Binds 2 Zn(2+) or Co(2+) ions per subunit.</text>
</comment>
<comment type="pathway">
    <text evidence="1">Amino-acid biosynthesis; L-lysine biosynthesis via DAP pathway; LL-2,6-diaminopimelate from (S)-tetrahydrodipicolinate (succinylase route): step 3/3.</text>
</comment>
<comment type="subunit">
    <text evidence="1">Homodimer.</text>
</comment>
<comment type="similarity">
    <text evidence="1">Belongs to the peptidase M20A family. DapE subfamily.</text>
</comment>
<keyword id="KW-0028">Amino-acid biosynthesis</keyword>
<keyword id="KW-0170">Cobalt</keyword>
<keyword id="KW-0220">Diaminopimelate biosynthesis</keyword>
<keyword id="KW-0378">Hydrolase</keyword>
<keyword id="KW-0457">Lysine biosynthesis</keyword>
<keyword id="KW-0479">Metal-binding</keyword>
<keyword id="KW-1185">Reference proteome</keyword>
<keyword id="KW-0862">Zinc</keyword>
<protein>
    <recommendedName>
        <fullName evidence="1">Succinyl-diaminopimelate desuccinylase</fullName>
        <shortName evidence="1">SDAP desuccinylase</shortName>
        <ecNumber evidence="1">3.5.1.18</ecNumber>
    </recommendedName>
    <alternativeName>
        <fullName evidence="1">N-succinyl-LL-2,6-diaminoheptanedioate amidohydrolase</fullName>
    </alternativeName>
</protein>
<sequence length="383" mass="41078">MTASSPSLSPTLELACELIRRPSVTPLDADCQALMMRRLEAAGFALEPMRIEEVDNFWARRGGDGPVLCFAGHTDVVPTGPLQAWQHQPFDALIDDQGMLCGRGAADMKGSLASMIVAVERFVADHPEHKGAIAFLITSDEEGPAHHGTKAVVERLAARGERLDWCIVGEPSSTSLVGDVVKNGRRGSLGAKLTIRGVQGHVAYPHLAKNPIHLAAPALAELAAEHWDDGNAFFPPTSFQVSNLNSGTGATNVIPGELTALFNFRFSTESTVEGLQKRVEAILDKHGLDWHVEWALSGLPFLTEPGELLDAVAASIRAVTGRETQPSTSGGTSDGRFIATMGTQVVELGPVNATIHQVNERVLASDLELLTEIYYQTLVRLLA</sequence>